<evidence type="ECO:0000255" key="1">
    <source>
        <dbReference type="HAMAP-Rule" id="MF_00333"/>
    </source>
</evidence>
<name>HEM6_VIBC3</name>
<accession>A5F4C4</accession>
<accession>C3M2I8</accession>
<sequence>MESIVDKQAVKHFLLQLQDKICQQLEATDGQAQFIEDAWQREPGEKLGGGGRTRVMREGAVFEQGGVNFSHVFGEQMPASATAHRPELAGRRFEAMGVSLVMHPKNPYVPTSHANVRFFIAEKEGEAPIWWFGGGFDLTPFYPFVEDGQHWHQTAKNICAPFGSEIYNEHKAWCDRYFYLPHRNETRGIGGLFFDDLNEWSFEQCFAYMQAVGEGYTQAYVPIVEKRKNTPFTERERQFQLYRRGRYVEFNLVLDRGTLFGLQTGGRTESILMSMPPLARWEYAYQPQAGTPEAKLSEFLVPREW</sequence>
<reference key="1">
    <citation type="submission" date="2007-03" db="EMBL/GenBank/DDBJ databases">
        <authorList>
            <person name="Heidelberg J."/>
        </authorList>
    </citation>
    <scope>NUCLEOTIDE SEQUENCE [LARGE SCALE GENOMIC DNA]</scope>
    <source>
        <strain>ATCC 39541 / Classical Ogawa 395 / O395</strain>
    </source>
</reference>
<reference key="2">
    <citation type="journal article" date="2008" name="PLoS ONE">
        <title>A recalibrated molecular clock and independent origins for the cholera pandemic clones.</title>
        <authorList>
            <person name="Feng L."/>
            <person name="Reeves P.R."/>
            <person name="Lan R."/>
            <person name="Ren Y."/>
            <person name="Gao C."/>
            <person name="Zhou Z."/>
            <person name="Ren Y."/>
            <person name="Cheng J."/>
            <person name="Wang W."/>
            <person name="Wang J."/>
            <person name="Qian W."/>
            <person name="Li D."/>
            <person name="Wang L."/>
        </authorList>
    </citation>
    <scope>NUCLEOTIDE SEQUENCE [LARGE SCALE GENOMIC DNA]</scope>
    <source>
        <strain>ATCC 39541 / Classical Ogawa 395 / O395</strain>
    </source>
</reference>
<comment type="function">
    <text evidence="1">Involved in the heme biosynthesis. Catalyzes the aerobic oxidative decarboxylation of propionate groups of rings A and B of coproporphyrinogen-III to yield the vinyl groups in protoporphyrinogen-IX.</text>
</comment>
<comment type="catalytic activity">
    <reaction evidence="1">
        <text>coproporphyrinogen III + O2 + 2 H(+) = protoporphyrinogen IX + 2 CO2 + 2 H2O</text>
        <dbReference type="Rhea" id="RHEA:18257"/>
        <dbReference type="ChEBI" id="CHEBI:15377"/>
        <dbReference type="ChEBI" id="CHEBI:15378"/>
        <dbReference type="ChEBI" id="CHEBI:15379"/>
        <dbReference type="ChEBI" id="CHEBI:16526"/>
        <dbReference type="ChEBI" id="CHEBI:57307"/>
        <dbReference type="ChEBI" id="CHEBI:57309"/>
        <dbReference type="EC" id="1.3.3.3"/>
    </reaction>
</comment>
<comment type="cofactor">
    <cofactor evidence="1">
        <name>a divalent metal cation</name>
        <dbReference type="ChEBI" id="CHEBI:60240"/>
    </cofactor>
</comment>
<comment type="pathway">
    <text evidence="1">Porphyrin-containing compound metabolism; protoporphyrin-IX biosynthesis; protoporphyrinogen-IX from coproporphyrinogen-III (O2 route): step 1/1.</text>
</comment>
<comment type="subunit">
    <text evidence="1">Homodimer.</text>
</comment>
<comment type="subcellular location">
    <subcellularLocation>
        <location evidence="1">Cytoplasm</location>
    </subcellularLocation>
</comment>
<comment type="similarity">
    <text evidence="1">Belongs to the aerobic coproporphyrinogen-III oxidase family.</text>
</comment>
<dbReference type="EC" id="1.3.3.3" evidence="1"/>
<dbReference type="EMBL" id="CP000627">
    <property type="protein sequence ID" value="ABQ20643.1"/>
    <property type="molecule type" value="Genomic_DNA"/>
</dbReference>
<dbReference type="EMBL" id="CP001235">
    <property type="protein sequence ID" value="ACP08152.1"/>
    <property type="molecule type" value="Genomic_DNA"/>
</dbReference>
<dbReference type="RefSeq" id="WP_000443976.1">
    <property type="nucleotide sequence ID" value="NZ_JAACZH010000018.1"/>
</dbReference>
<dbReference type="SMR" id="A5F4C4"/>
<dbReference type="KEGG" id="vco:VC0395_A2465"/>
<dbReference type="KEGG" id="vcr:VC395_0125"/>
<dbReference type="PATRIC" id="fig|345073.21.peg.116"/>
<dbReference type="eggNOG" id="COG0408">
    <property type="taxonomic scope" value="Bacteria"/>
</dbReference>
<dbReference type="HOGENOM" id="CLU_026169_0_1_6"/>
<dbReference type="OrthoDB" id="9777553at2"/>
<dbReference type="UniPathway" id="UPA00251">
    <property type="reaction ID" value="UER00322"/>
</dbReference>
<dbReference type="Proteomes" id="UP000000249">
    <property type="component" value="Chromosome 2"/>
</dbReference>
<dbReference type="GO" id="GO:0005737">
    <property type="term" value="C:cytoplasm"/>
    <property type="evidence" value="ECO:0007669"/>
    <property type="project" value="UniProtKB-SubCell"/>
</dbReference>
<dbReference type="GO" id="GO:0004109">
    <property type="term" value="F:coproporphyrinogen oxidase activity"/>
    <property type="evidence" value="ECO:0007669"/>
    <property type="project" value="UniProtKB-UniRule"/>
</dbReference>
<dbReference type="GO" id="GO:0046872">
    <property type="term" value="F:metal ion binding"/>
    <property type="evidence" value="ECO:0007669"/>
    <property type="project" value="UniProtKB-KW"/>
</dbReference>
<dbReference type="GO" id="GO:0042803">
    <property type="term" value="F:protein homodimerization activity"/>
    <property type="evidence" value="ECO:0000250"/>
    <property type="project" value="UniProtKB"/>
</dbReference>
<dbReference type="GO" id="GO:0006782">
    <property type="term" value="P:protoporphyrinogen IX biosynthetic process"/>
    <property type="evidence" value="ECO:0007669"/>
    <property type="project" value="UniProtKB-UniRule"/>
</dbReference>
<dbReference type="FunFam" id="3.40.1500.10:FF:000001">
    <property type="entry name" value="Oxygen-dependent coproporphyrinogen-III oxidase"/>
    <property type="match status" value="1"/>
</dbReference>
<dbReference type="Gene3D" id="3.40.1500.10">
    <property type="entry name" value="Coproporphyrinogen III oxidase, aerobic"/>
    <property type="match status" value="1"/>
</dbReference>
<dbReference type="HAMAP" id="MF_00333">
    <property type="entry name" value="Coprogen_oxidas"/>
    <property type="match status" value="1"/>
</dbReference>
<dbReference type="InterPro" id="IPR001260">
    <property type="entry name" value="Coprogen_oxidase_aer"/>
</dbReference>
<dbReference type="InterPro" id="IPR036406">
    <property type="entry name" value="Coprogen_oxidase_aer_sf"/>
</dbReference>
<dbReference type="InterPro" id="IPR018375">
    <property type="entry name" value="Coprogen_oxidase_CS"/>
</dbReference>
<dbReference type="NCBIfam" id="NF003727">
    <property type="entry name" value="PRK05330.1"/>
    <property type="match status" value="1"/>
</dbReference>
<dbReference type="PANTHER" id="PTHR10755">
    <property type="entry name" value="COPROPORPHYRINOGEN III OXIDASE, MITOCHONDRIAL"/>
    <property type="match status" value="1"/>
</dbReference>
<dbReference type="PANTHER" id="PTHR10755:SF0">
    <property type="entry name" value="OXYGEN-DEPENDENT COPROPORPHYRINOGEN-III OXIDASE, MITOCHONDRIAL"/>
    <property type="match status" value="1"/>
</dbReference>
<dbReference type="Pfam" id="PF01218">
    <property type="entry name" value="Coprogen_oxidas"/>
    <property type="match status" value="1"/>
</dbReference>
<dbReference type="PIRSF" id="PIRSF000166">
    <property type="entry name" value="Coproporphyri_ox"/>
    <property type="match status" value="1"/>
</dbReference>
<dbReference type="PRINTS" id="PR00073">
    <property type="entry name" value="COPRGNOXDASE"/>
</dbReference>
<dbReference type="SUPFAM" id="SSF102886">
    <property type="entry name" value="Coproporphyrinogen III oxidase"/>
    <property type="match status" value="1"/>
</dbReference>
<dbReference type="PROSITE" id="PS01021">
    <property type="entry name" value="COPROGEN_OXIDASE"/>
    <property type="match status" value="1"/>
</dbReference>
<keyword id="KW-0963">Cytoplasm</keyword>
<keyword id="KW-0350">Heme biosynthesis</keyword>
<keyword id="KW-0479">Metal-binding</keyword>
<keyword id="KW-0560">Oxidoreductase</keyword>
<keyword id="KW-0627">Porphyrin biosynthesis</keyword>
<proteinExistence type="inferred from homology"/>
<gene>
    <name evidence="1" type="primary">hemF</name>
    <name type="ordered locus">VC0395_A2465</name>
    <name type="ordered locus">VC395_0125</name>
</gene>
<protein>
    <recommendedName>
        <fullName evidence="1">Oxygen-dependent coproporphyrinogen-III oxidase</fullName>
        <shortName evidence="1">CPO</shortName>
        <shortName evidence="1">Coprogen oxidase</shortName>
        <shortName evidence="1">Coproporphyrinogenase</shortName>
        <ecNumber evidence="1">1.3.3.3</ecNumber>
    </recommendedName>
</protein>
<feature type="chain" id="PRO_1000072044" description="Oxygen-dependent coproporphyrinogen-III oxidase">
    <location>
        <begin position="1"/>
        <end position="305"/>
    </location>
</feature>
<feature type="region of interest" description="Important for dimerization" evidence="1">
    <location>
        <begin position="247"/>
        <end position="282"/>
    </location>
</feature>
<feature type="active site" description="Proton donor" evidence="1">
    <location>
        <position position="113"/>
    </location>
</feature>
<feature type="binding site" evidence="1">
    <location>
        <position position="99"/>
    </location>
    <ligand>
        <name>substrate</name>
    </ligand>
</feature>
<feature type="binding site" evidence="1">
    <location>
        <position position="103"/>
    </location>
    <ligand>
        <name>a divalent metal cation</name>
        <dbReference type="ChEBI" id="CHEBI:60240"/>
    </ligand>
</feature>
<feature type="binding site" evidence="1">
    <location>
        <position position="113"/>
    </location>
    <ligand>
        <name>a divalent metal cation</name>
        <dbReference type="ChEBI" id="CHEBI:60240"/>
    </ligand>
</feature>
<feature type="binding site" evidence="1">
    <location>
        <begin position="115"/>
        <end position="117"/>
    </location>
    <ligand>
        <name>substrate</name>
    </ligand>
</feature>
<feature type="binding site" evidence="1">
    <location>
        <position position="152"/>
    </location>
    <ligand>
        <name>a divalent metal cation</name>
        <dbReference type="ChEBI" id="CHEBI:60240"/>
    </ligand>
</feature>
<feature type="binding site" evidence="1">
    <location>
        <position position="182"/>
    </location>
    <ligand>
        <name>a divalent metal cation</name>
        <dbReference type="ChEBI" id="CHEBI:60240"/>
    </ligand>
</feature>
<feature type="binding site" evidence="1">
    <location>
        <begin position="265"/>
        <end position="267"/>
    </location>
    <ligand>
        <name>substrate</name>
    </ligand>
</feature>
<feature type="site" description="Important for dimerization" evidence="1">
    <location>
        <position position="182"/>
    </location>
</feature>
<organism>
    <name type="scientific">Vibrio cholerae serotype O1 (strain ATCC 39541 / Classical Ogawa 395 / O395)</name>
    <dbReference type="NCBI Taxonomy" id="345073"/>
    <lineage>
        <taxon>Bacteria</taxon>
        <taxon>Pseudomonadati</taxon>
        <taxon>Pseudomonadota</taxon>
        <taxon>Gammaproteobacteria</taxon>
        <taxon>Vibrionales</taxon>
        <taxon>Vibrionaceae</taxon>
        <taxon>Vibrio</taxon>
    </lineage>
</organism>